<accession>B7M4A3</accession>
<dbReference type="EC" id="1.1.1.103" evidence="1"/>
<dbReference type="EMBL" id="CU928160">
    <property type="protein sequence ID" value="CAR00586.1"/>
    <property type="molecule type" value="Genomic_DNA"/>
</dbReference>
<dbReference type="RefSeq" id="WP_000646014.1">
    <property type="nucleotide sequence ID" value="NC_011741.1"/>
</dbReference>
<dbReference type="SMR" id="B7M4A3"/>
<dbReference type="GeneID" id="93778332"/>
<dbReference type="KEGG" id="ecr:ECIAI1_3789"/>
<dbReference type="HOGENOM" id="CLU_026673_11_0_6"/>
<dbReference type="UniPathway" id="UPA00046">
    <property type="reaction ID" value="UER00505"/>
</dbReference>
<dbReference type="GO" id="GO:0005737">
    <property type="term" value="C:cytoplasm"/>
    <property type="evidence" value="ECO:0007669"/>
    <property type="project" value="UniProtKB-SubCell"/>
</dbReference>
<dbReference type="GO" id="GO:0008743">
    <property type="term" value="F:L-threonine 3-dehydrogenase activity"/>
    <property type="evidence" value="ECO:0007669"/>
    <property type="project" value="UniProtKB-UniRule"/>
</dbReference>
<dbReference type="GO" id="GO:0008270">
    <property type="term" value="F:zinc ion binding"/>
    <property type="evidence" value="ECO:0007669"/>
    <property type="project" value="UniProtKB-UniRule"/>
</dbReference>
<dbReference type="GO" id="GO:0019518">
    <property type="term" value="P:L-threonine catabolic process to glycine"/>
    <property type="evidence" value="ECO:0007669"/>
    <property type="project" value="UniProtKB-UniPathway"/>
</dbReference>
<dbReference type="FunFam" id="3.40.50.720:FF:000059">
    <property type="entry name" value="L-threonine 3-dehydrogenase"/>
    <property type="match status" value="1"/>
</dbReference>
<dbReference type="Gene3D" id="3.90.180.10">
    <property type="entry name" value="Medium-chain alcohol dehydrogenases, catalytic domain"/>
    <property type="match status" value="1"/>
</dbReference>
<dbReference type="Gene3D" id="3.40.50.720">
    <property type="entry name" value="NAD(P)-binding Rossmann-like Domain"/>
    <property type="match status" value="1"/>
</dbReference>
<dbReference type="HAMAP" id="MF_00627">
    <property type="entry name" value="Thr_dehydrog"/>
    <property type="match status" value="1"/>
</dbReference>
<dbReference type="InterPro" id="IPR013149">
    <property type="entry name" value="ADH-like_C"/>
</dbReference>
<dbReference type="InterPro" id="IPR013154">
    <property type="entry name" value="ADH-like_N"/>
</dbReference>
<dbReference type="InterPro" id="IPR002328">
    <property type="entry name" value="ADH_Zn_CS"/>
</dbReference>
<dbReference type="InterPro" id="IPR011032">
    <property type="entry name" value="GroES-like_sf"/>
</dbReference>
<dbReference type="InterPro" id="IPR004627">
    <property type="entry name" value="L-Threonine_3-DHase"/>
</dbReference>
<dbReference type="InterPro" id="IPR036291">
    <property type="entry name" value="NAD(P)-bd_dom_sf"/>
</dbReference>
<dbReference type="InterPro" id="IPR020843">
    <property type="entry name" value="PKS_ER"/>
</dbReference>
<dbReference type="InterPro" id="IPR050129">
    <property type="entry name" value="Zn_alcohol_dh"/>
</dbReference>
<dbReference type="NCBIfam" id="NF003808">
    <property type="entry name" value="PRK05396.1"/>
    <property type="match status" value="1"/>
</dbReference>
<dbReference type="NCBIfam" id="TIGR00692">
    <property type="entry name" value="tdh"/>
    <property type="match status" value="1"/>
</dbReference>
<dbReference type="PANTHER" id="PTHR43401">
    <property type="entry name" value="L-THREONINE 3-DEHYDROGENASE"/>
    <property type="match status" value="1"/>
</dbReference>
<dbReference type="PANTHER" id="PTHR43401:SF2">
    <property type="entry name" value="L-THREONINE 3-DEHYDROGENASE"/>
    <property type="match status" value="1"/>
</dbReference>
<dbReference type="Pfam" id="PF08240">
    <property type="entry name" value="ADH_N"/>
    <property type="match status" value="1"/>
</dbReference>
<dbReference type="Pfam" id="PF00107">
    <property type="entry name" value="ADH_zinc_N"/>
    <property type="match status" value="1"/>
</dbReference>
<dbReference type="SMART" id="SM00829">
    <property type="entry name" value="PKS_ER"/>
    <property type="match status" value="1"/>
</dbReference>
<dbReference type="SUPFAM" id="SSF50129">
    <property type="entry name" value="GroES-like"/>
    <property type="match status" value="1"/>
</dbReference>
<dbReference type="SUPFAM" id="SSF51735">
    <property type="entry name" value="NAD(P)-binding Rossmann-fold domains"/>
    <property type="match status" value="1"/>
</dbReference>
<dbReference type="PROSITE" id="PS00059">
    <property type="entry name" value="ADH_ZINC"/>
    <property type="match status" value="1"/>
</dbReference>
<name>TDH_ECO8A</name>
<protein>
    <recommendedName>
        <fullName evidence="1">L-threonine 3-dehydrogenase</fullName>
        <shortName evidence="1">TDH</shortName>
        <ecNumber evidence="1">1.1.1.103</ecNumber>
    </recommendedName>
</protein>
<sequence>MKALSKLKAEEGIWMTDVPVPELGHNDLLIKIRKTAICGTDVHIYNWDEWSQKTIPVPMVVGHEYVGEVVGIGQEVKGFKIGDRVSGEGHITCGHCRNCRGGRTHLCRNTIGVGVNRPGCFAEYLVIPAFNAFKIPDNISDDLASIFDPFGNAVHTALSFDLVGEDVLVSGAGPIGIMAAAVAKHVGARNVVITDVNEYRLELARKMGITRAVNVAKENLNDVMAELGMTEGFDVGLEMSGAPPAFRTMLDTMNHGGRIAMLGIPPSDMSIDWTKVIFKGLFIKGIYGREMFETWYKMAALIQSGLDLSPIITHRFSIDDFQKGFDAMRSGQSGKVILSWD</sequence>
<reference key="1">
    <citation type="journal article" date="2009" name="PLoS Genet.">
        <title>Organised genome dynamics in the Escherichia coli species results in highly diverse adaptive paths.</title>
        <authorList>
            <person name="Touchon M."/>
            <person name="Hoede C."/>
            <person name="Tenaillon O."/>
            <person name="Barbe V."/>
            <person name="Baeriswyl S."/>
            <person name="Bidet P."/>
            <person name="Bingen E."/>
            <person name="Bonacorsi S."/>
            <person name="Bouchier C."/>
            <person name="Bouvet O."/>
            <person name="Calteau A."/>
            <person name="Chiapello H."/>
            <person name="Clermont O."/>
            <person name="Cruveiller S."/>
            <person name="Danchin A."/>
            <person name="Diard M."/>
            <person name="Dossat C."/>
            <person name="Karoui M.E."/>
            <person name="Frapy E."/>
            <person name="Garry L."/>
            <person name="Ghigo J.M."/>
            <person name="Gilles A.M."/>
            <person name="Johnson J."/>
            <person name="Le Bouguenec C."/>
            <person name="Lescat M."/>
            <person name="Mangenot S."/>
            <person name="Martinez-Jehanne V."/>
            <person name="Matic I."/>
            <person name="Nassif X."/>
            <person name="Oztas S."/>
            <person name="Petit M.A."/>
            <person name="Pichon C."/>
            <person name="Rouy Z."/>
            <person name="Ruf C.S."/>
            <person name="Schneider D."/>
            <person name="Tourret J."/>
            <person name="Vacherie B."/>
            <person name="Vallenet D."/>
            <person name="Medigue C."/>
            <person name="Rocha E.P.C."/>
            <person name="Denamur E."/>
        </authorList>
    </citation>
    <scope>NUCLEOTIDE SEQUENCE [LARGE SCALE GENOMIC DNA]</scope>
    <source>
        <strain>IAI1</strain>
    </source>
</reference>
<proteinExistence type="inferred from homology"/>
<comment type="function">
    <text evidence="1">Catalyzes the NAD(+)-dependent oxidation of L-threonine to 2-amino-3-ketobutyrate.</text>
</comment>
<comment type="catalytic activity">
    <reaction evidence="1">
        <text>L-threonine + NAD(+) = (2S)-2-amino-3-oxobutanoate + NADH + H(+)</text>
        <dbReference type="Rhea" id="RHEA:13161"/>
        <dbReference type="ChEBI" id="CHEBI:15378"/>
        <dbReference type="ChEBI" id="CHEBI:57540"/>
        <dbReference type="ChEBI" id="CHEBI:57926"/>
        <dbReference type="ChEBI" id="CHEBI:57945"/>
        <dbReference type="ChEBI" id="CHEBI:78948"/>
        <dbReference type="EC" id="1.1.1.103"/>
    </reaction>
</comment>
<comment type="cofactor">
    <cofactor evidence="1">
        <name>Zn(2+)</name>
        <dbReference type="ChEBI" id="CHEBI:29105"/>
    </cofactor>
    <text evidence="1">Binds 2 Zn(2+) ions per subunit.</text>
</comment>
<comment type="pathway">
    <text evidence="1">Amino-acid degradation; L-threonine degradation via oxydo-reductase pathway; glycine from L-threonine: step 1/2.</text>
</comment>
<comment type="subunit">
    <text evidence="1">Homotetramer.</text>
</comment>
<comment type="subcellular location">
    <subcellularLocation>
        <location evidence="1">Cytoplasm</location>
    </subcellularLocation>
</comment>
<comment type="similarity">
    <text evidence="1">Belongs to the zinc-containing alcohol dehydrogenase family.</text>
</comment>
<evidence type="ECO:0000255" key="1">
    <source>
        <dbReference type="HAMAP-Rule" id="MF_00627"/>
    </source>
</evidence>
<feature type="chain" id="PRO_1000130547" description="L-threonine 3-dehydrogenase">
    <location>
        <begin position="1"/>
        <end position="341"/>
    </location>
</feature>
<feature type="active site" description="Charge relay system" evidence="1">
    <location>
        <position position="40"/>
    </location>
</feature>
<feature type="active site" description="Charge relay system" evidence="1">
    <location>
        <position position="43"/>
    </location>
</feature>
<feature type="binding site" evidence="1">
    <location>
        <position position="38"/>
    </location>
    <ligand>
        <name>Zn(2+)</name>
        <dbReference type="ChEBI" id="CHEBI:29105"/>
        <label>1</label>
        <note>catalytic</note>
    </ligand>
</feature>
<feature type="binding site" evidence="1">
    <location>
        <position position="63"/>
    </location>
    <ligand>
        <name>Zn(2+)</name>
        <dbReference type="ChEBI" id="CHEBI:29105"/>
        <label>1</label>
        <note>catalytic</note>
    </ligand>
</feature>
<feature type="binding site" evidence="1">
    <location>
        <position position="64"/>
    </location>
    <ligand>
        <name>Zn(2+)</name>
        <dbReference type="ChEBI" id="CHEBI:29105"/>
        <label>1</label>
        <note>catalytic</note>
    </ligand>
</feature>
<feature type="binding site" evidence="1">
    <location>
        <position position="93"/>
    </location>
    <ligand>
        <name>Zn(2+)</name>
        <dbReference type="ChEBI" id="CHEBI:29105"/>
        <label>2</label>
    </ligand>
</feature>
<feature type="binding site" evidence="1">
    <location>
        <position position="96"/>
    </location>
    <ligand>
        <name>Zn(2+)</name>
        <dbReference type="ChEBI" id="CHEBI:29105"/>
        <label>2</label>
    </ligand>
</feature>
<feature type="binding site" evidence="1">
    <location>
        <position position="99"/>
    </location>
    <ligand>
        <name>Zn(2+)</name>
        <dbReference type="ChEBI" id="CHEBI:29105"/>
        <label>2</label>
    </ligand>
</feature>
<feature type="binding site" evidence="1">
    <location>
        <position position="107"/>
    </location>
    <ligand>
        <name>Zn(2+)</name>
        <dbReference type="ChEBI" id="CHEBI:29105"/>
        <label>2</label>
    </ligand>
</feature>
<feature type="binding site" evidence="1">
    <location>
        <position position="175"/>
    </location>
    <ligand>
        <name>NAD(+)</name>
        <dbReference type="ChEBI" id="CHEBI:57540"/>
    </ligand>
</feature>
<feature type="binding site" evidence="1">
    <location>
        <position position="195"/>
    </location>
    <ligand>
        <name>NAD(+)</name>
        <dbReference type="ChEBI" id="CHEBI:57540"/>
    </ligand>
</feature>
<feature type="binding site" evidence="1">
    <location>
        <position position="200"/>
    </location>
    <ligand>
        <name>NAD(+)</name>
        <dbReference type="ChEBI" id="CHEBI:57540"/>
    </ligand>
</feature>
<feature type="binding site" evidence="1">
    <location>
        <begin position="262"/>
        <end position="264"/>
    </location>
    <ligand>
        <name>NAD(+)</name>
        <dbReference type="ChEBI" id="CHEBI:57540"/>
    </ligand>
</feature>
<feature type="binding site" evidence="1">
    <location>
        <begin position="286"/>
        <end position="287"/>
    </location>
    <ligand>
        <name>NAD(+)</name>
        <dbReference type="ChEBI" id="CHEBI:57540"/>
    </ligand>
</feature>
<feature type="site" description="Important for catalytic activity for the proton relay mechanism but does not participate directly in the coordination of zinc atom" evidence="1">
    <location>
        <position position="148"/>
    </location>
</feature>
<gene>
    <name evidence="1" type="primary">tdh</name>
    <name type="ordered locus">ECIAI1_3789</name>
</gene>
<organism>
    <name type="scientific">Escherichia coli O8 (strain IAI1)</name>
    <dbReference type="NCBI Taxonomy" id="585034"/>
    <lineage>
        <taxon>Bacteria</taxon>
        <taxon>Pseudomonadati</taxon>
        <taxon>Pseudomonadota</taxon>
        <taxon>Gammaproteobacteria</taxon>
        <taxon>Enterobacterales</taxon>
        <taxon>Enterobacteriaceae</taxon>
        <taxon>Escherichia</taxon>
    </lineage>
</organism>
<keyword id="KW-0963">Cytoplasm</keyword>
<keyword id="KW-0479">Metal-binding</keyword>
<keyword id="KW-0520">NAD</keyword>
<keyword id="KW-0560">Oxidoreductase</keyword>
<keyword id="KW-0862">Zinc</keyword>